<organism>
    <name type="scientific">Candida glabrata (strain ATCC 2001 / BCRC 20586 / JCM 3761 / NBRC 0622 / NRRL Y-65 / CBS 138)</name>
    <name type="common">Yeast</name>
    <name type="synonym">Nakaseomyces glabratus</name>
    <dbReference type="NCBI Taxonomy" id="284593"/>
    <lineage>
        <taxon>Eukaryota</taxon>
        <taxon>Fungi</taxon>
        <taxon>Dikarya</taxon>
        <taxon>Ascomycota</taxon>
        <taxon>Saccharomycotina</taxon>
        <taxon>Saccharomycetes</taxon>
        <taxon>Saccharomycetales</taxon>
        <taxon>Saccharomycetaceae</taxon>
        <taxon>Nakaseomyces</taxon>
    </lineage>
</organism>
<sequence>MRKQVIGINNIFHLARIRSIPVHCHCKGPLYSYPVVSKTLFHTKNVEVSKYSHVELRSLNEQIHSQLTSLTDLNKRQLLLVETLSRNNNLEKLLDYYEIDEGSVEDAIQLLQDSNVSIQEFSSMIQPVLNRTNLVGKYHMGYLSKLMQIYISLTRTHNGGSVDALNKDDMNKFIKRFIEGSQLKRAQTALQFLLDGYKERGEDLLGPYGDKQTIAHFLMLRSGALQDLWKIDVSNGNNKKQAFYKINGSHRNVKSTYNVLDSVKLFEIVRYILRYNDKDNHSQPVYFDEGILKNVILCLGYVGQTTLIEDIINKIWELDSVSVPPKYNITVTSDLLTAIVSAYSKCGKSIQPGLVIADKFFGKIPNIIVKDDFWINLQKWNIILPNKWRSTIDLSKRTWELMKSWRNSTNNGGFITANVEFLNLVYKVLSSDYIKLKDLEWIYDIFQHSLVTLYSKNSLTVDEIKLLKKFQIFTIKKMVYFGHYSKCLQFIKEWSYDAANKQQLTNLFVVLRNRYLQKRGYNQEKEMTKVQKKYDEEEQEDMLLGGLW</sequence>
<reference key="1">
    <citation type="journal article" date="2004" name="Nature">
        <title>Genome evolution in yeasts.</title>
        <authorList>
            <person name="Dujon B."/>
            <person name="Sherman D."/>
            <person name="Fischer G."/>
            <person name="Durrens P."/>
            <person name="Casaregola S."/>
            <person name="Lafontaine I."/>
            <person name="de Montigny J."/>
            <person name="Marck C."/>
            <person name="Neuveglise C."/>
            <person name="Talla E."/>
            <person name="Goffard N."/>
            <person name="Frangeul L."/>
            <person name="Aigle M."/>
            <person name="Anthouard V."/>
            <person name="Babour A."/>
            <person name="Barbe V."/>
            <person name="Barnay S."/>
            <person name="Blanchin S."/>
            <person name="Beckerich J.-M."/>
            <person name="Beyne E."/>
            <person name="Bleykasten C."/>
            <person name="Boisrame A."/>
            <person name="Boyer J."/>
            <person name="Cattolico L."/>
            <person name="Confanioleri F."/>
            <person name="de Daruvar A."/>
            <person name="Despons L."/>
            <person name="Fabre E."/>
            <person name="Fairhead C."/>
            <person name="Ferry-Dumazet H."/>
            <person name="Groppi A."/>
            <person name="Hantraye F."/>
            <person name="Hennequin C."/>
            <person name="Jauniaux N."/>
            <person name="Joyet P."/>
            <person name="Kachouri R."/>
            <person name="Kerrest A."/>
            <person name="Koszul R."/>
            <person name="Lemaire M."/>
            <person name="Lesur I."/>
            <person name="Ma L."/>
            <person name="Muller H."/>
            <person name="Nicaud J.-M."/>
            <person name="Nikolski M."/>
            <person name="Oztas S."/>
            <person name="Ozier-Kalogeropoulos O."/>
            <person name="Pellenz S."/>
            <person name="Potier S."/>
            <person name="Richard G.-F."/>
            <person name="Straub M.-L."/>
            <person name="Suleau A."/>
            <person name="Swennen D."/>
            <person name="Tekaia F."/>
            <person name="Wesolowski-Louvel M."/>
            <person name="Westhof E."/>
            <person name="Wirth B."/>
            <person name="Zeniou-Meyer M."/>
            <person name="Zivanovic Y."/>
            <person name="Bolotin-Fukuhara M."/>
            <person name="Thierry A."/>
            <person name="Bouchier C."/>
            <person name="Caudron B."/>
            <person name="Scarpelli C."/>
            <person name="Gaillardin C."/>
            <person name="Weissenbach J."/>
            <person name="Wincker P."/>
            <person name="Souciet J.-L."/>
        </authorList>
    </citation>
    <scope>NUCLEOTIDE SEQUENCE [LARGE SCALE GENOMIC DNA]</scope>
    <source>
        <strain>ATCC 2001 / BCRC 20586 / JCM 3761 / NBRC 0622 / NRRL Y-65 / CBS 138</strain>
    </source>
</reference>
<keyword id="KW-0496">Mitochondrion</keyword>
<keyword id="KW-1185">Reference proteome</keyword>
<keyword id="KW-0694">RNA-binding</keyword>
<keyword id="KW-0809">Transit peptide</keyword>
<keyword id="KW-0810">Translation regulation</keyword>
<feature type="transit peptide" description="Mitochondrion" evidence="2">
    <location>
        <begin position="1"/>
        <end position="27"/>
    </location>
</feature>
<feature type="chain" id="PRO_0000405630" description="ATPase expression protein 2, mitochondrial">
    <location>
        <begin position="28"/>
        <end position="548"/>
    </location>
</feature>
<accession>Q6FJW4</accession>
<protein>
    <recommendedName>
        <fullName>ATPase expression protein 2, mitochondrial</fullName>
    </recommendedName>
</protein>
<evidence type="ECO:0000250" key="1"/>
<evidence type="ECO:0000255" key="2"/>
<evidence type="ECO:0000305" key="3"/>
<dbReference type="EMBL" id="CR380959">
    <property type="protein sequence ID" value="CAG62456.1"/>
    <property type="molecule type" value="Genomic_DNA"/>
</dbReference>
<dbReference type="RefSeq" id="XP_449480.1">
    <property type="nucleotide sequence ID" value="XM_449480.1"/>
</dbReference>
<dbReference type="FunCoup" id="Q6FJW4">
    <property type="interactions" value="51"/>
</dbReference>
<dbReference type="EnsemblFungi" id="CAGL0M03069g-T">
    <property type="protein sequence ID" value="CAGL0M03069g-T-p1"/>
    <property type="gene ID" value="CAGL0M03069g"/>
</dbReference>
<dbReference type="KEGG" id="cgr:2891488"/>
<dbReference type="CGD" id="CAL0137107">
    <property type="gene designation" value="CAGL0M03069g"/>
</dbReference>
<dbReference type="VEuPathDB" id="FungiDB:CAGL0M03069g"/>
<dbReference type="eggNOG" id="ENOG502RX9I">
    <property type="taxonomic scope" value="Eukaryota"/>
</dbReference>
<dbReference type="HOGENOM" id="CLU_496947_0_0_1"/>
<dbReference type="InParanoid" id="Q6FJW4"/>
<dbReference type="OMA" id="LQLRCGA"/>
<dbReference type="Proteomes" id="UP000002428">
    <property type="component" value="Chromosome M"/>
</dbReference>
<dbReference type="GO" id="GO:0005739">
    <property type="term" value="C:mitochondrion"/>
    <property type="evidence" value="ECO:0007669"/>
    <property type="project" value="UniProtKB-SubCell"/>
</dbReference>
<dbReference type="GO" id="GO:0003723">
    <property type="term" value="F:RNA binding"/>
    <property type="evidence" value="ECO:0007669"/>
    <property type="project" value="UniProtKB-KW"/>
</dbReference>
<dbReference type="GO" id="GO:0006417">
    <property type="term" value="P:regulation of translation"/>
    <property type="evidence" value="ECO:0007669"/>
    <property type="project" value="UniProtKB-KW"/>
</dbReference>
<dbReference type="InterPro" id="IPR024319">
    <property type="entry name" value="ATPase_expression_mit"/>
</dbReference>
<dbReference type="Pfam" id="PF12921">
    <property type="entry name" value="ATP13"/>
    <property type="match status" value="1"/>
</dbReference>
<gene>
    <name type="primary">AEP2</name>
    <name type="ordered locus">CAGL0M03069g</name>
</gene>
<name>AEP2_CANGA</name>
<proteinExistence type="inferred from homology"/>
<comment type="function">
    <text evidence="1">Required for translation of the mitochondrial OLI1 transcript coding for the mitochondrial ATP synthase subunit 9.</text>
</comment>
<comment type="subunit">
    <text evidence="1">Binds to the 5'UTR of the OLI1 mRNA.</text>
</comment>
<comment type="subcellular location">
    <subcellularLocation>
        <location evidence="1">Mitochondrion</location>
    </subcellularLocation>
</comment>
<comment type="similarity">
    <text evidence="3">Belongs to the AEP2 family.</text>
</comment>